<keyword id="KW-0025">Alternative splicing</keyword>
<keyword id="KW-0175">Coiled coil</keyword>
<keyword id="KW-0225">Disease variant</keyword>
<keyword id="KW-0343">GTPase activation</keyword>
<keyword id="KW-0597">Phosphoprotein</keyword>
<keyword id="KW-1267">Proteomics identification</keyword>
<keyword id="KW-1185">Reference proteome</keyword>
<keyword id="KW-0728">SH3 domain</keyword>
<reference key="1">
    <citation type="journal article" date="2004" name="Genome Res.">
        <title>The status, quality, and expansion of the NIH full-length cDNA project: the Mammalian Gene Collection (MGC).</title>
        <authorList>
            <consortium name="The MGC Project Team"/>
        </authorList>
    </citation>
    <scope>NUCLEOTIDE SEQUENCE [LARGE SCALE MRNA] (ISOFORM 1)</scope>
    <source>
        <tissue>Uterus</tissue>
    </source>
</reference>
<reference key="2">
    <citation type="journal article" date="2000" name="DNA Res.">
        <title>Prediction of the coding sequences of unidentified human genes. XVI. The complete sequences of 150 new cDNA clones from brain which code for large proteins in vitro.</title>
        <authorList>
            <person name="Nagase T."/>
            <person name="Kikuno R."/>
            <person name="Ishikawa K."/>
            <person name="Hirosawa M."/>
            <person name="Ohara O."/>
        </authorList>
    </citation>
    <scope>NUCLEOTIDE SEQUENCE [LARGE SCALE MRNA] OF 23-1085 (ISOFORM 2)</scope>
    <source>
        <tissue>Brain</tissue>
    </source>
</reference>
<reference key="3">
    <citation type="journal article" date="2001" name="Cell">
        <title>Signal transduction in neuronal migration: roles of GTPase activating proteins and the small GTPase Cdc42 in the Slit-Robo pathway.</title>
        <authorList>
            <person name="Wong K."/>
            <person name="Ren X.R."/>
            <person name="Huang Y.Z."/>
            <person name="Xie Y."/>
            <person name="Liu G."/>
            <person name="Saito H."/>
            <person name="Tang H."/>
            <person name="Wen L."/>
            <person name="Brady-Kalnay S.M."/>
            <person name="Mei L."/>
            <person name="Wu J.Y."/>
            <person name="Xiong W.C."/>
            <person name="Rao Y."/>
        </authorList>
    </citation>
    <scope>FUNCTION</scope>
    <scope>TISSUE SPECIFICITY</scope>
    <scope>INTERACTION WITH ROBO1; CDC42 AND RHOA</scope>
</reference>
<reference key="4">
    <citation type="journal article" date="2006" name="Cell">
        <title>Global, in vivo, and site-specific phosphorylation dynamics in signaling networks.</title>
        <authorList>
            <person name="Olsen J.V."/>
            <person name="Blagoev B."/>
            <person name="Gnad F."/>
            <person name="Macek B."/>
            <person name="Kumar C."/>
            <person name="Mortensen P."/>
            <person name="Mann M."/>
        </authorList>
    </citation>
    <scope>IDENTIFICATION BY MASS SPECTROMETRY [LARGE SCALE ANALYSIS]</scope>
    <source>
        <tissue>Cervix carcinoma</tissue>
    </source>
</reference>
<reference key="5">
    <citation type="journal article" date="2008" name="J. Proteome Res.">
        <title>Combining protein-based IMAC, peptide-based IMAC, and MudPIT for efficient phosphoproteomic analysis.</title>
        <authorList>
            <person name="Cantin G.T."/>
            <person name="Yi W."/>
            <person name="Lu B."/>
            <person name="Park S.K."/>
            <person name="Xu T."/>
            <person name="Lee J.-D."/>
            <person name="Yates J.R. III"/>
        </authorList>
    </citation>
    <scope>IDENTIFICATION BY MASS SPECTROMETRY [LARGE SCALE ANALYSIS]</scope>
    <source>
        <tissue>Cervix carcinoma</tissue>
    </source>
</reference>
<reference key="6">
    <citation type="journal article" date="2008" name="Proc. Natl. Acad. Sci. U.S.A.">
        <title>A quantitative atlas of mitotic phosphorylation.</title>
        <authorList>
            <person name="Dephoure N."/>
            <person name="Zhou C."/>
            <person name="Villen J."/>
            <person name="Beausoleil S.A."/>
            <person name="Bakalarski C.E."/>
            <person name="Elledge S.J."/>
            <person name="Gygi S.P."/>
        </authorList>
    </citation>
    <scope>PHOSPHORYLATION [LARGE SCALE ANALYSIS] AT SER-999; THR-1001 AND SER-1032</scope>
    <scope>IDENTIFICATION BY MASS SPECTROMETRY [LARGE SCALE ANALYSIS]</scope>
    <source>
        <tissue>Cervix carcinoma</tissue>
    </source>
</reference>
<reference key="7">
    <citation type="journal article" date="2009" name="BMC Immunol.">
        <title>Identification of SH3 domain interaction partners of human FasL (CD178) by phage display screening.</title>
        <authorList>
            <person name="Voss M."/>
            <person name="Lettau M."/>
            <person name="Janssen O."/>
        </authorList>
    </citation>
    <scope>INTERACTION WITH FASLG</scope>
</reference>
<reference key="8">
    <citation type="journal article" date="2010" name="Sci. Signal.">
        <title>Quantitative phosphoproteomics reveals widespread full phosphorylation site occupancy during mitosis.</title>
        <authorList>
            <person name="Olsen J.V."/>
            <person name="Vermeulen M."/>
            <person name="Santamaria A."/>
            <person name="Kumar C."/>
            <person name="Miller M.L."/>
            <person name="Jensen L.J."/>
            <person name="Gnad F."/>
            <person name="Cox J."/>
            <person name="Jensen T.S."/>
            <person name="Nigg E.A."/>
            <person name="Brunak S."/>
            <person name="Mann M."/>
        </authorList>
    </citation>
    <scope>IDENTIFICATION BY MASS SPECTROMETRY [LARGE SCALE ANALYSIS]</scope>
    <source>
        <tissue>Cervix carcinoma</tissue>
    </source>
</reference>
<reference key="9">
    <citation type="journal article" date="2011" name="BMC Syst. Biol.">
        <title>Initial characterization of the human central proteome.</title>
        <authorList>
            <person name="Burkard T.R."/>
            <person name="Planyavsky M."/>
            <person name="Kaupe I."/>
            <person name="Breitwieser F.P."/>
            <person name="Buerckstuemmer T."/>
            <person name="Bennett K.L."/>
            <person name="Superti-Furga G."/>
            <person name="Colinge J."/>
        </authorList>
    </citation>
    <scope>IDENTIFICATION BY MASS SPECTROMETRY [LARGE SCALE ANALYSIS]</scope>
</reference>
<reference key="10">
    <citation type="journal article" date="2012" name="J. Cell Sci.">
        <title>The F-BAR domains from srGAP1, srGAP2, and srGAP3 differentially regulate membrane deformation.</title>
        <authorList>
            <person name="Coutinho-Budd J."/>
            <person name="Ghukasyan V."/>
            <person name="Zylka M.J."/>
            <person name="Polleux F."/>
        </authorList>
    </citation>
    <scope>HETEROOLIGOMERIZATION</scope>
    <scope>DOMAIN F-BAR</scope>
</reference>
<reference key="11">
    <citation type="journal article" date="2013" name="J. Clin. Endocrinol. Metab.">
        <title>SRGAP1 is a candidate gene for papillary thyroid carcinoma susceptibility.</title>
        <authorList>
            <person name="He H."/>
            <person name="Bronisz A."/>
            <person name="Liyanarachchi S."/>
            <person name="Nagy R."/>
            <person name="Li W."/>
            <person name="Huang Y."/>
            <person name="Akagi K."/>
            <person name="Saji M."/>
            <person name="Kula D."/>
            <person name="Wojcicka A."/>
            <person name="Sebastian N."/>
            <person name="Wen B."/>
            <person name="Puch Z."/>
            <person name="Kalemba M."/>
            <person name="Stachlewska E."/>
            <person name="Czetwertynska M."/>
            <person name="Dlugosinska J."/>
            <person name="Dymecka K."/>
            <person name="Ploski R."/>
            <person name="Krawczyk M."/>
            <person name="Morrison P.J."/>
            <person name="Ringel M.D."/>
            <person name="Kloos R.T."/>
            <person name="Jazdzewski K."/>
            <person name="Symer D.E."/>
            <person name="Vieland V.J."/>
            <person name="Ostrowski M."/>
            <person name="Jarzab B."/>
            <person name="de la Chapelle A."/>
        </authorList>
    </citation>
    <scope>INVOLVEMENT IN NMTC2</scope>
    <scope>VARIANTS NMTC2 HIS-149; THR-275; CYS-617 AND ARG-875</scope>
    <scope>CHARACTERIZATION OF VARIANTS NMTC2 HIS-149; THR-275; CYS-617 AND ARG-875</scope>
</reference>
<reference key="12">
    <citation type="journal article" date="2013" name="J. Proteome Res.">
        <title>Toward a comprehensive characterization of a human cancer cell phosphoproteome.</title>
        <authorList>
            <person name="Zhou H."/>
            <person name="Di Palma S."/>
            <person name="Preisinger C."/>
            <person name="Peng M."/>
            <person name="Polat A.N."/>
            <person name="Heck A.J."/>
            <person name="Mohammed S."/>
        </authorList>
    </citation>
    <scope>PHOSPHORYLATION [LARGE SCALE ANALYSIS] AT SER-416; SER-835; SER-917; SER-932 AND SER-1032</scope>
    <scope>IDENTIFICATION BY MASS SPECTROMETRY [LARGE SCALE ANALYSIS]</scope>
    <source>
        <tissue>Cervix carcinoma</tissue>
    </source>
</reference>
<name>SRGP1_HUMAN</name>
<dbReference type="EMBL" id="BC053903">
    <property type="protein sequence ID" value="AAH53903.1"/>
    <property type="molecule type" value="mRNA"/>
</dbReference>
<dbReference type="EMBL" id="AB037725">
    <property type="protein sequence ID" value="BAA92542.1"/>
    <property type="status" value="ALT_INIT"/>
    <property type="molecule type" value="mRNA"/>
</dbReference>
<dbReference type="CCDS" id="CCDS8967.1">
    <molecule id="Q7Z6B7-1"/>
</dbReference>
<dbReference type="CCDS" id="CCDS91718.1">
    <molecule id="Q7Z6B7-2"/>
</dbReference>
<dbReference type="PIR" id="G59436">
    <property type="entry name" value="G59436"/>
</dbReference>
<dbReference type="RefSeq" id="NP_001333130.1">
    <molecule id="Q7Z6B7-2"/>
    <property type="nucleotide sequence ID" value="NM_001346201.2"/>
</dbReference>
<dbReference type="RefSeq" id="NP_065813.1">
    <molecule id="Q7Z6B7-1"/>
    <property type="nucleotide sequence ID" value="NM_020762.4"/>
</dbReference>
<dbReference type="SMR" id="Q7Z6B7"/>
<dbReference type="BioGRID" id="121583">
    <property type="interactions" value="40"/>
</dbReference>
<dbReference type="DIP" id="DIP-53826N"/>
<dbReference type="FunCoup" id="Q7Z6B7">
    <property type="interactions" value="1407"/>
</dbReference>
<dbReference type="IntAct" id="Q7Z6B7">
    <property type="interactions" value="27"/>
</dbReference>
<dbReference type="MINT" id="Q7Z6B7"/>
<dbReference type="STRING" id="9606.ENSP00000347198"/>
<dbReference type="GlyConnect" id="2077">
    <property type="glycosylation" value="1 N-Linked glycan (1 site)"/>
</dbReference>
<dbReference type="GlyCosmos" id="Q7Z6B7">
    <property type="glycosylation" value="3 sites, 4 glycans"/>
</dbReference>
<dbReference type="GlyGen" id="Q7Z6B7">
    <property type="glycosylation" value="7 sites, 3 N-linked glycans (1 site), 2 O-linked glycans (6 sites)"/>
</dbReference>
<dbReference type="iPTMnet" id="Q7Z6B7"/>
<dbReference type="PhosphoSitePlus" id="Q7Z6B7"/>
<dbReference type="SwissPalm" id="Q7Z6B7"/>
<dbReference type="BioMuta" id="SRGAP1"/>
<dbReference type="DMDM" id="48428624"/>
<dbReference type="jPOST" id="Q7Z6B7"/>
<dbReference type="MassIVE" id="Q7Z6B7"/>
<dbReference type="PaxDb" id="9606-ENSP00000347198"/>
<dbReference type="PeptideAtlas" id="Q7Z6B7"/>
<dbReference type="ProteomicsDB" id="69392">
    <molecule id="Q7Z6B7-1"/>
</dbReference>
<dbReference type="ProteomicsDB" id="69393">
    <molecule id="Q7Z6B7-2"/>
</dbReference>
<dbReference type="Pumba" id="Q7Z6B7"/>
<dbReference type="ABCD" id="Q7Z6B7">
    <property type="antibodies" value="7 sequenced antibodies"/>
</dbReference>
<dbReference type="Antibodypedia" id="29129">
    <property type="antibodies" value="224 antibodies from 28 providers"/>
</dbReference>
<dbReference type="DNASU" id="57522"/>
<dbReference type="Ensembl" id="ENST00000355086.8">
    <molecule id="Q7Z6B7-1"/>
    <property type="protein sequence ID" value="ENSP00000347198.3"/>
    <property type="gene ID" value="ENSG00000196935.10"/>
</dbReference>
<dbReference type="Ensembl" id="ENST00000631006.3">
    <molecule id="Q7Z6B7-2"/>
    <property type="protein sequence ID" value="ENSP00000485752.2"/>
    <property type="gene ID" value="ENSG00000196935.10"/>
</dbReference>
<dbReference type="GeneID" id="57522"/>
<dbReference type="KEGG" id="hsa:57522"/>
<dbReference type="MANE-Select" id="ENST00000355086.8">
    <property type="protein sequence ID" value="ENSP00000347198.3"/>
    <property type="RefSeq nucleotide sequence ID" value="NM_020762.4"/>
    <property type="RefSeq protein sequence ID" value="NP_065813.1"/>
</dbReference>
<dbReference type="UCSC" id="uc010ssp.2">
    <molecule id="Q7Z6B7-1"/>
    <property type="organism name" value="human"/>
</dbReference>
<dbReference type="AGR" id="HGNC:17382"/>
<dbReference type="CTD" id="57522"/>
<dbReference type="DisGeNET" id="57522"/>
<dbReference type="GeneCards" id="SRGAP1"/>
<dbReference type="HGNC" id="HGNC:17382">
    <property type="gene designation" value="SRGAP1"/>
</dbReference>
<dbReference type="HPA" id="ENSG00000196935">
    <property type="expression patterns" value="Low tissue specificity"/>
</dbReference>
<dbReference type="MalaCards" id="SRGAP1"/>
<dbReference type="MIM" id="188470">
    <property type="type" value="phenotype"/>
</dbReference>
<dbReference type="MIM" id="606523">
    <property type="type" value="gene"/>
</dbReference>
<dbReference type="neXtProt" id="NX_Q7Z6B7"/>
<dbReference type="OpenTargets" id="ENSG00000196935"/>
<dbReference type="PharmGKB" id="PA134887956"/>
<dbReference type="VEuPathDB" id="HostDB:ENSG00000196935"/>
<dbReference type="eggNOG" id="KOG3565">
    <property type="taxonomic scope" value="Eukaryota"/>
</dbReference>
<dbReference type="GeneTree" id="ENSGT00950000182824"/>
<dbReference type="HOGENOM" id="CLU_005715_0_0_1"/>
<dbReference type="InParanoid" id="Q7Z6B7"/>
<dbReference type="OMA" id="CPVHQPH"/>
<dbReference type="OrthoDB" id="5981864at2759"/>
<dbReference type="PAN-GO" id="Q7Z6B7">
    <property type="GO annotations" value="2 GO annotations based on evolutionary models"/>
</dbReference>
<dbReference type="PhylomeDB" id="Q7Z6B7"/>
<dbReference type="TreeFam" id="TF315892"/>
<dbReference type="PathwayCommons" id="Q7Z6B7"/>
<dbReference type="Reactome" id="R-HSA-428543">
    <property type="pathway name" value="Inactivation of CDC42 and RAC1"/>
</dbReference>
<dbReference type="Reactome" id="R-HSA-8980692">
    <property type="pathway name" value="RHOA GTPase cycle"/>
</dbReference>
<dbReference type="Reactome" id="R-HSA-9013148">
    <property type="pathway name" value="CDC42 GTPase cycle"/>
</dbReference>
<dbReference type="Reactome" id="R-HSA-9013149">
    <property type="pathway name" value="RAC1 GTPase cycle"/>
</dbReference>
<dbReference type="SignaLink" id="Q7Z6B7"/>
<dbReference type="SIGNOR" id="Q7Z6B7"/>
<dbReference type="BioGRID-ORCS" id="57522">
    <property type="hits" value="10 hits in 1140 CRISPR screens"/>
</dbReference>
<dbReference type="ChiTaRS" id="SRGAP1">
    <property type="organism name" value="human"/>
</dbReference>
<dbReference type="GeneWiki" id="SRGAP1"/>
<dbReference type="GenomeRNAi" id="57522"/>
<dbReference type="Pharos" id="Q7Z6B7">
    <property type="development level" value="Tbio"/>
</dbReference>
<dbReference type="PRO" id="PR:Q7Z6B7"/>
<dbReference type="Proteomes" id="UP000005640">
    <property type="component" value="Chromosome 12"/>
</dbReference>
<dbReference type="RNAct" id="Q7Z6B7">
    <property type="molecule type" value="protein"/>
</dbReference>
<dbReference type="Bgee" id="ENSG00000196935">
    <property type="expression patterns" value="Expressed in buccal mucosa cell and 188 other cell types or tissues"/>
</dbReference>
<dbReference type="ExpressionAtlas" id="Q7Z6B7">
    <property type="expression patterns" value="baseline and differential"/>
</dbReference>
<dbReference type="GO" id="GO:0005737">
    <property type="term" value="C:cytoplasm"/>
    <property type="evidence" value="ECO:0000318"/>
    <property type="project" value="GO_Central"/>
</dbReference>
<dbReference type="GO" id="GO:0005829">
    <property type="term" value="C:cytosol"/>
    <property type="evidence" value="ECO:0000304"/>
    <property type="project" value="Reactome"/>
</dbReference>
<dbReference type="GO" id="GO:0005096">
    <property type="term" value="F:GTPase activator activity"/>
    <property type="evidence" value="ECO:0000304"/>
    <property type="project" value="Reactome"/>
</dbReference>
<dbReference type="GO" id="GO:0031267">
    <property type="term" value="F:small GTPase binding"/>
    <property type="evidence" value="ECO:0007669"/>
    <property type="project" value="Ensembl"/>
</dbReference>
<dbReference type="GO" id="GO:0016477">
    <property type="term" value="P:cell migration"/>
    <property type="evidence" value="ECO:0007669"/>
    <property type="project" value="Ensembl"/>
</dbReference>
<dbReference type="GO" id="GO:0030336">
    <property type="term" value="P:negative regulation of cell migration"/>
    <property type="evidence" value="ECO:0000318"/>
    <property type="project" value="GO_Central"/>
</dbReference>
<dbReference type="GO" id="GO:0007266">
    <property type="term" value="P:Rho protein signal transduction"/>
    <property type="evidence" value="ECO:0007669"/>
    <property type="project" value="Ensembl"/>
</dbReference>
<dbReference type="CDD" id="cd07683">
    <property type="entry name" value="F-BAR_srGAP1"/>
    <property type="match status" value="1"/>
</dbReference>
<dbReference type="CDD" id="cd04383">
    <property type="entry name" value="RhoGAP_srGAP"/>
    <property type="match status" value="1"/>
</dbReference>
<dbReference type="CDD" id="cd11955">
    <property type="entry name" value="SH3_srGAP1-3"/>
    <property type="match status" value="1"/>
</dbReference>
<dbReference type="FunFam" id="1.10.555.10:FF:000010">
    <property type="entry name" value="SLIT-ROBO Rho GTPase-activating protein 1 isoform 2"/>
    <property type="match status" value="1"/>
</dbReference>
<dbReference type="FunFam" id="1.20.1270.60:FF:000006">
    <property type="entry name" value="SLIT-ROBO Rho GTPase-activating protein 1 isoform 2"/>
    <property type="match status" value="1"/>
</dbReference>
<dbReference type="FunFam" id="2.30.30.40:FF:000005">
    <property type="entry name" value="SLIT-ROBO Rho GTPase-activating protein 1 isoform 2"/>
    <property type="match status" value="1"/>
</dbReference>
<dbReference type="Gene3D" id="1.20.1270.60">
    <property type="entry name" value="Arfaptin homology (AH) domain/BAR domain"/>
    <property type="match status" value="1"/>
</dbReference>
<dbReference type="Gene3D" id="1.10.555.10">
    <property type="entry name" value="Rho GTPase activation protein"/>
    <property type="match status" value="1"/>
</dbReference>
<dbReference type="Gene3D" id="2.30.30.40">
    <property type="entry name" value="SH3 Domains"/>
    <property type="match status" value="1"/>
</dbReference>
<dbReference type="InterPro" id="IPR027267">
    <property type="entry name" value="AH/BAR_dom_sf"/>
</dbReference>
<dbReference type="InterPro" id="IPR031160">
    <property type="entry name" value="F_BAR"/>
</dbReference>
<dbReference type="InterPro" id="IPR001060">
    <property type="entry name" value="FCH_dom"/>
</dbReference>
<dbReference type="InterPro" id="IPR008936">
    <property type="entry name" value="Rho_GTPase_activation_prot"/>
</dbReference>
<dbReference type="InterPro" id="IPR000198">
    <property type="entry name" value="RhoGAP_dom"/>
</dbReference>
<dbReference type="InterPro" id="IPR036028">
    <property type="entry name" value="SH3-like_dom_sf"/>
</dbReference>
<dbReference type="InterPro" id="IPR001452">
    <property type="entry name" value="SH3_domain"/>
</dbReference>
<dbReference type="InterPro" id="IPR051627">
    <property type="entry name" value="SLIT-ROBO_RhoGAP"/>
</dbReference>
<dbReference type="InterPro" id="IPR035648">
    <property type="entry name" value="srGAP1/2/3_SH3"/>
</dbReference>
<dbReference type="InterPro" id="IPR037451">
    <property type="entry name" value="srGAP1_F-BAR"/>
</dbReference>
<dbReference type="PANTHER" id="PTHR14166">
    <property type="entry name" value="SLIT-ROBO RHO GTPASE ACTIVATING PROTEIN"/>
    <property type="match status" value="1"/>
</dbReference>
<dbReference type="Pfam" id="PF00611">
    <property type="entry name" value="FCH"/>
    <property type="match status" value="1"/>
</dbReference>
<dbReference type="Pfam" id="PF00620">
    <property type="entry name" value="RhoGAP"/>
    <property type="match status" value="1"/>
</dbReference>
<dbReference type="Pfam" id="PF00018">
    <property type="entry name" value="SH3_1"/>
    <property type="match status" value="1"/>
</dbReference>
<dbReference type="SMART" id="SM00055">
    <property type="entry name" value="FCH"/>
    <property type="match status" value="1"/>
</dbReference>
<dbReference type="SMART" id="SM00324">
    <property type="entry name" value="RhoGAP"/>
    <property type="match status" value="1"/>
</dbReference>
<dbReference type="SMART" id="SM00326">
    <property type="entry name" value="SH3"/>
    <property type="match status" value="1"/>
</dbReference>
<dbReference type="SUPFAM" id="SSF103657">
    <property type="entry name" value="BAR/IMD domain-like"/>
    <property type="match status" value="1"/>
</dbReference>
<dbReference type="SUPFAM" id="SSF48350">
    <property type="entry name" value="GTPase activation domain, GAP"/>
    <property type="match status" value="1"/>
</dbReference>
<dbReference type="SUPFAM" id="SSF50044">
    <property type="entry name" value="SH3-domain"/>
    <property type="match status" value="1"/>
</dbReference>
<dbReference type="PROSITE" id="PS51741">
    <property type="entry name" value="F_BAR"/>
    <property type="match status" value="1"/>
</dbReference>
<dbReference type="PROSITE" id="PS50238">
    <property type="entry name" value="RHOGAP"/>
    <property type="match status" value="1"/>
</dbReference>
<dbReference type="PROSITE" id="PS50002">
    <property type="entry name" value="SH3"/>
    <property type="match status" value="1"/>
</dbReference>
<protein>
    <recommendedName>
        <fullName>SLIT-ROBO Rho GTPase-activating protein 1</fullName>
        <shortName>srGAP1</shortName>
    </recommendedName>
    <alternativeName>
        <fullName>Rho GTPase-activating protein 13</fullName>
    </alternativeName>
</protein>
<sequence length="1085" mass="124264">MSTPSRFKKDKEIIAEYESQVKEIRAQLVEQQKCLEQQTEMRVQLLQDLQDFFRKKAEIETEYSRNLEKLAERFMAKTRSTKDHQQYKKDQNLLSPVNCWYLLLNQVRRESKDHATLSDIYLNNVIMRFMQISEDSTRMFKKSKEIAFQLHEDLMKVLNELYTVMKTYHMYHAESISAESKLKEAEKQEEKQIGRSGDPVFHIRLEERHQRRSSVKKIEKMKEKRQAKYSENKLKSIKARNEYLLTLEATNASVFKYYIHDLSDLIDCCDLGYHASLNRALRTYLSAEYNLETSRHEGLDIIENAVDNLEPRSDKQRFMEMYPAAFCPPMKFEFQSHMGDEVCQVSAQQPVQAELMLRYQQLQSRLATLKIENEEVKKTTEATLQTIQDMVTIEDYDVSECFQHSRSTESVKSTVSETYLSKPSIAKRRANQQETEQFYFMKLREYLEGSNLITKLQAKHDLLQRTLGEGHRAEYMTTRPPNVPPKPQKHRKSRPRSQYNTKLFNGDLETFVKDSGQVIPLIVESCIRFINLYGLQHQGIFRVSGSQVEVNDIKNSFERGENPLADDQSNHDINSVAGVLKLYFRGLENPLFPKERFNDLISCIRIDNLYERALHIRKLLLTLPRSVLIVMRYLFAFLNHLSQYSDENMMDPYNLAICFGPTLMPVPEIQDQVSCQAHVNEIIKTIIIHHETIFPDAKELDGPVYEKCMAGDDYCDSPYSEHGTLEEVDQDAGTEPHTSEDECEPIEAIAKFDYVGRSARELSFKKGASLLLYHRASEDWWEGRHNGIDGLVPHQYIVVQDMDDTFSDTLSQKADSEASSGPVTEDKSSSKDMNSPTDRHPDGYLARQRKRGEPPPPVRRPGRTSDGHCPLHPPHALSNSSVDLGSPSLASHPRGLLQNRGLNNDSPERRRRPGHGSLTNISRHDSLKKIDSPPIRRSTSSGQYTGFNDHKPLDPETIAQDIEETMNTALNELRELERQSTAKHAPDVVLDTLEQVKNSPTPATSTESLSPLHNVALRSSEPQIRRSTSSSSDTMSTFKPMVAPRMGVQLKPPALRPKPAVLPKTNPTIGPAPPPQGPTDKSCTM</sequence>
<evidence type="ECO:0000255" key="1"/>
<evidence type="ECO:0000255" key="2">
    <source>
        <dbReference type="PROSITE-ProRule" id="PRU00172"/>
    </source>
</evidence>
<evidence type="ECO:0000255" key="3">
    <source>
        <dbReference type="PROSITE-ProRule" id="PRU00192"/>
    </source>
</evidence>
<evidence type="ECO:0000255" key="4">
    <source>
        <dbReference type="PROSITE-ProRule" id="PRU01077"/>
    </source>
</evidence>
<evidence type="ECO:0000256" key="5">
    <source>
        <dbReference type="SAM" id="MobiDB-lite"/>
    </source>
</evidence>
<evidence type="ECO:0000269" key="6">
    <source>
    </source>
</evidence>
<evidence type="ECO:0000269" key="7">
    <source>
    </source>
</evidence>
<evidence type="ECO:0000269" key="8">
    <source>
    </source>
</evidence>
<evidence type="ECO:0000269" key="9">
    <source>
    </source>
</evidence>
<evidence type="ECO:0000303" key="10">
    <source>
    </source>
</evidence>
<evidence type="ECO:0000305" key="11"/>
<evidence type="ECO:0007744" key="12">
    <source>
    </source>
</evidence>
<evidence type="ECO:0007744" key="13">
    <source>
    </source>
</evidence>
<proteinExistence type="evidence at protein level"/>
<organism>
    <name type="scientific">Homo sapiens</name>
    <name type="common">Human</name>
    <dbReference type="NCBI Taxonomy" id="9606"/>
    <lineage>
        <taxon>Eukaryota</taxon>
        <taxon>Metazoa</taxon>
        <taxon>Chordata</taxon>
        <taxon>Craniata</taxon>
        <taxon>Vertebrata</taxon>
        <taxon>Euteleostomi</taxon>
        <taxon>Mammalia</taxon>
        <taxon>Eutheria</taxon>
        <taxon>Euarchontoglires</taxon>
        <taxon>Primates</taxon>
        <taxon>Haplorrhini</taxon>
        <taxon>Catarrhini</taxon>
        <taxon>Hominidae</taxon>
        <taxon>Homo</taxon>
    </lineage>
</organism>
<accession>Q7Z6B7</accession>
<accession>Q9H8A3</accession>
<accession>Q9P2P2</accession>
<comment type="function">
    <text evidence="6">GTPase-activating protein for RhoA and Cdc42 small GTPases. Together with CDC42 seems to be involved in the pathway mediating the repulsive signaling of Robo and Slit proteins in neuronal migration. SLIT2, probably through interaction with ROBO1, increases the interaction of SRGAP1 with ROBO1 and inactivates CDC42.</text>
</comment>
<comment type="subunit">
    <text evidence="6 7 11">Homodimer (Probable). Forms a heterooligomer with SRGAP2 and SRGAP3 through its F-BAR domain. Interacts with ROBO1, CDC42 and RHOA. Interacts with FASLG.</text>
</comment>
<comment type="interaction">
    <interactant intactId="EBI-2481729">
        <id>Q7Z6B7</id>
    </interactant>
    <interactant intactId="EBI-717515">
        <id>Q14155</id>
        <label>ARHGEF7</label>
    </interactant>
    <organismsDiffer>false</organismsDiffer>
    <experiments>4</experiments>
</comment>
<comment type="interaction">
    <interactant intactId="EBI-2481729">
        <id>Q7Z6B7</id>
    </interactant>
    <interactant intactId="EBI-466029">
        <id>P42858</id>
        <label>HTT</label>
    </interactant>
    <organismsDiffer>false</organismsDiffer>
    <experiments>4</experiments>
</comment>
<comment type="interaction">
    <interactant intactId="EBI-2481729">
        <id>Q7Z6B7</id>
    </interactant>
    <interactant intactId="EBI-347088">
        <id>P63104</id>
        <label>YWHAZ</label>
    </interactant>
    <organismsDiffer>false</organismsDiffer>
    <experiments>4</experiments>
</comment>
<comment type="alternative products">
    <event type="alternative splicing"/>
    <isoform>
        <id>Q7Z6B7-1</id>
        <name>1</name>
        <sequence type="displayed"/>
    </isoform>
    <isoform>
        <id>Q7Z6B7-2</id>
        <name>2</name>
        <sequence type="described" ref="VSP_010580"/>
    </isoform>
</comment>
<comment type="tissue specificity">
    <text evidence="6">Expressed in brain, lung, kidney, and testis.</text>
</comment>
<comment type="domain">
    <text evidence="8">The F-BAR domain mediates oligomerization, binds membranes, and constrains plasma membrane protrusions.</text>
</comment>
<comment type="disease" evidence="9">
    <disease id="DI-04532">
        <name>Thyroid cancer, non-medullary, 2</name>
        <acronym>NMTC2</acronym>
        <description>A form of non-medullary thyroid cancer (NMTC), a cancer characterized by tumors originating from the thyroid follicular cells. NMTCs represent approximately 95% of all cases of thyroid cancer and are classified into papillary, follicular, Hurthle cell, and anaplastic neoplasms.</description>
        <dbReference type="MIM" id="188470"/>
    </disease>
    <text>Disease susceptibility is associated with variants affecting the gene represented in this entry.</text>
</comment>
<comment type="sequence caution" evidence="11">
    <conflict type="erroneous initiation">
        <sequence resource="EMBL-CDS" id="BAA92542"/>
    </conflict>
    <text>Truncated N-terminus.</text>
</comment>
<comment type="sequence caution" evidence="11">
    <conflict type="miscellaneous discrepancy">
        <sequence resource="EMBL-CDS" id="BAA92542"/>
    </conflict>
    <text>Intron retention.</text>
</comment>
<gene>
    <name type="primary">SRGAP1</name>
    <name type="synonym">ARHGAP13</name>
    <name type="synonym">KIAA1304</name>
</gene>
<feature type="chain" id="PRO_0000056765" description="SLIT-ROBO Rho GTPase-activating protein 1">
    <location>
        <begin position="1"/>
        <end position="1085"/>
    </location>
</feature>
<feature type="domain" description="F-BAR" evidence="4">
    <location>
        <begin position="19"/>
        <end position="314"/>
    </location>
</feature>
<feature type="domain" description="Rho-GAP" evidence="2">
    <location>
        <begin position="506"/>
        <end position="694"/>
    </location>
</feature>
<feature type="domain" description="SH3" evidence="3">
    <location>
        <begin position="743"/>
        <end position="802"/>
    </location>
</feature>
<feature type="region of interest" description="Disordered" evidence="5">
    <location>
        <begin position="475"/>
        <end position="496"/>
    </location>
</feature>
<feature type="region of interest" description="Disordered" evidence="5">
    <location>
        <begin position="808"/>
        <end position="954"/>
    </location>
</feature>
<feature type="region of interest" description="Disordered" evidence="5">
    <location>
        <begin position="997"/>
        <end position="1038"/>
    </location>
</feature>
<feature type="region of interest" description="Disordered" evidence="5">
    <location>
        <begin position="1051"/>
        <end position="1085"/>
    </location>
</feature>
<feature type="coiled-coil region" evidence="1">
    <location>
        <begin position="351"/>
        <end position="390"/>
    </location>
</feature>
<feature type="coiled-coil region" evidence="1">
    <location>
        <begin position="956"/>
        <end position="985"/>
    </location>
</feature>
<feature type="compositionally biased region" description="Polar residues" evidence="5">
    <location>
        <begin position="808"/>
        <end position="822"/>
    </location>
</feature>
<feature type="compositionally biased region" description="Basic and acidic residues" evidence="5">
    <location>
        <begin position="922"/>
        <end position="931"/>
    </location>
</feature>
<feature type="compositionally biased region" description="Polar residues" evidence="5">
    <location>
        <begin position="937"/>
        <end position="946"/>
    </location>
</feature>
<feature type="compositionally biased region" description="Polar residues" evidence="5">
    <location>
        <begin position="997"/>
        <end position="1011"/>
    </location>
</feature>
<feature type="compositionally biased region" description="Low complexity" evidence="5">
    <location>
        <begin position="1027"/>
        <end position="1037"/>
    </location>
</feature>
<feature type="site" description="Arginine finger; crucial for GTP hydrolysis by stabilizing the transition state" evidence="2">
    <location>
        <position position="542"/>
    </location>
</feature>
<feature type="modified residue" description="Phosphoserine" evidence="13">
    <location>
        <position position="416"/>
    </location>
</feature>
<feature type="modified residue" description="Phosphoserine" evidence="13">
    <location>
        <position position="835"/>
    </location>
</feature>
<feature type="modified residue" description="Phosphoserine" evidence="13">
    <location>
        <position position="917"/>
    </location>
</feature>
<feature type="modified residue" description="Phosphoserine" evidence="13">
    <location>
        <position position="932"/>
    </location>
</feature>
<feature type="modified residue" description="Phosphoserine" evidence="12">
    <location>
        <position position="999"/>
    </location>
</feature>
<feature type="modified residue" description="Phosphothreonine" evidence="12">
    <location>
        <position position="1001"/>
    </location>
</feature>
<feature type="modified residue" description="Phosphoserine" evidence="12 13">
    <location>
        <position position="1032"/>
    </location>
</feature>
<feature type="splice variant" id="VSP_010580" description="In isoform 2." evidence="10">
    <original>RPPNVPPKPQKHRKSRPRSQYNTKLFNGDLETFVK</original>
    <variation>SRGRRNSHTRHQ</variation>
    <location>
        <begin position="479"/>
        <end position="513"/>
    </location>
</feature>
<feature type="sequence variant" id="VAR_075879" description="In NMTC2; does not affect the interaction with ROBO1; decreased GTPase activator activity; in SLIT2 and ROBO1-mediated inhibition of CDC42; dbSNP:rs781626187." evidence="9">
    <original>Q</original>
    <variation>H</variation>
    <location>
        <position position="149"/>
    </location>
</feature>
<feature type="sequence variant" id="VAR_075880" description="In NMTC2; does not affect the interaction with ROBO1; slightly increased GTPase activator activity; in SLIT2 and ROBO1-mediated inhibition of CDC42; dbSNP:rs797044990." evidence="9">
    <original>A</original>
    <variation>T</variation>
    <location>
        <position position="275"/>
    </location>
</feature>
<feature type="sequence variant" id="VAR_075881" description="In dbSNP:rs74691643." evidence="9">
    <original>V</original>
    <variation>I</variation>
    <location>
        <position position="512"/>
    </location>
</feature>
<feature type="sequence variant" id="VAR_075882" description="In NMTC2; does not affect the interaction with ROBO1; decreased GTPase activator activity; in SLIT2 and ROBO1-mediated inhibition of CDC42; dbSNP:rs114817817." evidence="9">
    <original>R</original>
    <variation>C</variation>
    <location>
        <position position="617"/>
    </location>
</feature>
<feature type="sequence variant" id="VAR_075883" description="In NMTC2; does not affect the interaction with ROBO1; slightly increased GTPase activator activity; in SLIT2 and ROBO1-mediated inhibition of CDC42; dbSNP:rs61754221." evidence="9">
    <original>H</original>
    <variation>R</variation>
    <location>
        <position position="875"/>
    </location>
</feature>